<proteinExistence type="evidence at protein level"/>
<sequence length="351" mass="37498">MGRFEDDAEVEDREVSPALTVGEGDIDASLRPRSLGEFIGQPRVREQLQLVLEGAKKRGGTPDHILLSGPPGLGKTSLAMIIAAELGSSLRVTSGPALERAGDLAAMLSNLVEHDVLFIDEIHRIARPAEEMLYLAMEDFRVDVVVGKGPGATSIPLEVAPFTLVGATTRSGALTGPLRDRFGFTAHMDFYEPVELERVLARSAGILGIELGAEAGAEIARRSRGTPRIANRLLRRVRDFAEVRADGIITRDIAKSALEVYDVDELGLDRLDRAVLSALTRSFNGGPVGVSTLAVAVGEEATTVEEVCEPFLVRAGMIARTPRGRVATPLAWTHLGLQPPVTGIGQAGLFD</sequence>
<accession>A0QWH6</accession>
<accession>I7FCU5</accession>
<comment type="function">
    <text evidence="1">The RuvA-RuvB-RuvC complex processes Holliday junction (HJ) DNA during genetic recombination and DNA repair, while the RuvA-RuvB complex plays an important role in the rescue of blocked DNA replication forks via replication fork reversal (RFR). RuvA specifically binds to HJ cruciform DNA, conferring on it an open structure. The RuvB hexamer acts as an ATP-dependent pump, pulling dsDNA into and through the RuvAB complex. RuvB forms 2 homohexamers on either side of HJ DNA bound by 1 or 2 RuvA tetramers; 4 subunits per hexamer contact DNA at a time. Coordinated motions by a converter formed by DNA-disengaged RuvB subunits stimulates ATP hydrolysis and nucleotide exchange. Immobilization of the converter enables RuvB to convert the ATP-contained energy into a lever motion, pulling 2 nucleotides of DNA out of the RuvA tetramer per ATP hydrolyzed, thus driving DNA branch migration. The RuvB motors rotate together with the DNA substrate, which together with the progressing nucleotide cycle form the mechanistic basis for DNA recombination by continuous HJ branch migration. Branch migration allows RuvC to scan DNA until it finds its consensus sequence, where it cleaves and resolves cruciform DNA.</text>
</comment>
<comment type="catalytic activity">
    <reaction evidence="1">
        <text>ATP + H2O = ADP + phosphate + H(+)</text>
        <dbReference type="Rhea" id="RHEA:13065"/>
        <dbReference type="ChEBI" id="CHEBI:15377"/>
        <dbReference type="ChEBI" id="CHEBI:15378"/>
        <dbReference type="ChEBI" id="CHEBI:30616"/>
        <dbReference type="ChEBI" id="CHEBI:43474"/>
        <dbReference type="ChEBI" id="CHEBI:456216"/>
    </reaction>
</comment>
<comment type="subunit">
    <text evidence="1">Homohexamer. Forms an RuvA(8)-RuvB(12)-Holliday junction (HJ) complex. HJ DNA is sandwiched between 2 RuvA tetramers; dsDNA enters through RuvA and exits via RuvB. An RuvB hexamer assembles on each DNA strand where it exits the tetramer. Each RuvB hexamer is contacted by two RuvA subunits (via domain III) on 2 adjacent RuvB subunits; this complex drives branch migration. In the full resolvosome a probable DNA-RuvA(4)-RuvB(12)-RuvC(2) complex forms which resolves the HJ.</text>
</comment>
<comment type="subcellular location">
    <subcellularLocation>
        <location evidence="1">Cytoplasm</location>
    </subcellularLocation>
</comment>
<comment type="domain">
    <text evidence="1">Has 3 domains, the large (RuvB-L) and small ATPase (RuvB-S) domains and the C-terminal head (RuvB-H) domain. The head domain binds DNA, while the ATPase domains jointly bind ATP, ADP or are empty depending on the state of the subunit in the translocation cycle. During a single DNA translocation step the structure of each domain remains the same, but their relative positions change.</text>
</comment>
<comment type="similarity">
    <text evidence="1">Belongs to the RuvB family.</text>
</comment>
<reference key="1">
    <citation type="submission" date="2006-10" db="EMBL/GenBank/DDBJ databases">
        <authorList>
            <person name="Fleischmann R.D."/>
            <person name="Dodson R.J."/>
            <person name="Haft D.H."/>
            <person name="Merkel J.S."/>
            <person name="Nelson W.C."/>
            <person name="Fraser C.M."/>
        </authorList>
    </citation>
    <scope>NUCLEOTIDE SEQUENCE [LARGE SCALE GENOMIC DNA]</scope>
    <source>
        <strain>ATCC 700084 / mc(2)155</strain>
    </source>
</reference>
<reference key="2">
    <citation type="journal article" date="2007" name="Genome Biol.">
        <title>Interrupted coding sequences in Mycobacterium smegmatis: authentic mutations or sequencing errors?</title>
        <authorList>
            <person name="Deshayes C."/>
            <person name="Perrodou E."/>
            <person name="Gallien S."/>
            <person name="Euphrasie D."/>
            <person name="Schaeffer C."/>
            <person name="Van-Dorsselaer A."/>
            <person name="Poch O."/>
            <person name="Lecompte O."/>
            <person name="Reyrat J.-M."/>
        </authorList>
    </citation>
    <scope>NUCLEOTIDE SEQUENCE [LARGE SCALE GENOMIC DNA]</scope>
    <source>
        <strain>ATCC 700084 / mc(2)155</strain>
    </source>
</reference>
<reference key="3">
    <citation type="journal article" date="2009" name="Genome Res.">
        <title>Ortho-proteogenomics: multiple proteomes investigation through orthology and a new MS-based protocol.</title>
        <authorList>
            <person name="Gallien S."/>
            <person name="Perrodou E."/>
            <person name="Carapito C."/>
            <person name="Deshayes C."/>
            <person name="Reyrat J.-M."/>
            <person name="Van Dorsselaer A."/>
            <person name="Poch O."/>
            <person name="Schaeffer C."/>
            <person name="Lecompte O."/>
        </authorList>
    </citation>
    <scope>NUCLEOTIDE SEQUENCE [LARGE SCALE GENOMIC DNA]</scope>
    <scope>IDENTIFICATION BY MASS SPECTROMETRY [LARGE SCALE ANALYSIS]</scope>
    <source>
        <strain>ATCC 700084 / mc(2)155</strain>
    </source>
</reference>
<dbReference type="EC" id="3.6.4.-" evidence="1"/>
<dbReference type="EMBL" id="CP000480">
    <property type="protein sequence ID" value="ABK75910.1"/>
    <property type="molecule type" value="Genomic_DNA"/>
</dbReference>
<dbReference type="EMBL" id="CP001663">
    <property type="protein sequence ID" value="AFP39335.1"/>
    <property type="molecule type" value="Genomic_DNA"/>
</dbReference>
<dbReference type="RefSeq" id="WP_011728709.1">
    <property type="nucleotide sequence ID" value="NZ_SIJM01000002.1"/>
</dbReference>
<dbReference type="RefSeq" id="YP_887264.1">
    <property type="nucleotide sequence ID" value="NC_008596.1"/>
</dbReference>
<dbReference type="SMR" id="A0QWH6"/>
<dbReference type="STRING" id="246196.MSMEG_2945"/>
<dbReference type="PaxDb" id="246196-MSMEI_2871"/>
<dbReference type="GeneID" id="93457725"/>
<dbReference type="KEGG" id="msb:LJ00_14655"/>
<dbReference type="KEGG" id="msg:MSMEI_2871"/>
<dbReference type="KEGG" id="msm:MSMEG_2945"/>
<dbReference type="PATRIC" id="fig|246196.19.peg.2908"/>
<dbReference type="eggNOG" id="COG2255">
    <property type="taxonomic scope" value="Bacteria"/>
</dbReference>
<dbReference type="OrthoDB" id="9804478at2"/>
<dbReference type="Proteomes" id="UP000000757">
    <property type="component" value="Chromosome"/>
</dbReference>
<dbReference type="Proteomes" id="UP000006158">
    <property type="component" value="Chromosome"/>
</dbReference>
<dbReference type="GO" id="GO:0005737">
    <property type="term" value="C:cytoplasm"/>
    <property type="evidence" value="ECO:0007669"/>
    <property type="project" value="UniProtKB-SubCell"/>
</dbReference>
<dbReference type="GO" id="GO:0048476">
    <property type="term" value="C:Holliday junction resolvase complex"/>
    <property type="evidence" value="ECO:0007669"/>
    <property type="project" value="UniProtKB-UniRule"/>
</dbReference>
<dbReference type="GO" id="GO:0005524">
    <property type="term" value="F:ATP binding"/>
    <property type="evidence" value="ECO:0007669"/>
    <property type="project" value="UniProtKB-UniRule"/>
</dbReference>
<dbReference type="GO" id="GO:0016887">
    <property type="term" value="F:ATP hydrolysis activity"/>
    <property type="evidence" value="ECO:0007669"/>
    <property type="project" value="InterPro"/>
</dbReference>
<dbReference type="GO" id="GO:0000400">
    <property type="term" value="F:four-way junction DNA binding"/>
    <property type="evidence" value="ECO:0007669"/>
    <property type="project" value="UniProtKB-UniRule"/>
</dbReference>
<dbReference type="GO" id="GO:0009378">
    <property type="term" value="F:four-way junction helicase activity"/>
    <property type="evidence" value="ECO:0007669"/>
    <property type="project" value="InterPro"/>
</dbReference>
<dbReference type="GO" id="GO:0006310">
    <property type="term" value="P:DNA recombination"/>
    <property type="evidence" value="ECO:0007669"/>
    <property type="project" value="UniProtKB-UniRule"/>
</dbReference>
<dbReference type="GO" id="GO:0006281">
    <property type="term" value="P:DNA repair"/>
    <property type="evidence" value="ECO:0007669"/>
    <property type="project" value="UniProtKB-UniRule"/>
</dbReference>
<dbReference type="CDD" id="cd00009">
    <property type="entry name" value="AAA"/>
    <property type="match status" value="1"/>
</dbReference>
<dbReference type="Gene3D" id="1.10.8.60">
    <property type="match status" value="1"/>
</dbReference>
<dbReference type="Gene3D" id="3.40.50.300">
    <property type="entry name" value="P-loop containing nucleotide triphosphate hydrolases"/>
    <property type="match status" value="1"/>
</dbReference>
<dbReference type="Gene3D" id="1.10.10.10">
    <property type="entry name" value="Winged helix-like DNA-binding domain superfamily/Winged helix DNA-binding domain"/>
    <property type="match status" value="1"/>
</dbReference>
<dbReference type="HAMAP" id="MF_00016">
    <property type="entry name" value="DNA_HJ_migration_RuvB"/>
    <property type="match status" value="1"/>
</dbReference>
<dbReference type="InterPro" id="IPR003593">
    <property type="entry name" value="AAA+_ATPase"/>
</dbReference>
<dbReference type="InterPro" id="IPR041445">
    <property type="entry name" value="AAA_lid_4"/>
</dbReference>
<dbReference type="InterPro" id="IPR004605">
    <property type="entry name" value="DNA_helicase_Holl-junc_RuvB"/>
</dbReference>
<dbReference type="InterPro" id="IPR027417">
    <property type="entry name" value="P-loop_NTPase"/>
</dbReference>
<dbReference type="InterPro" id="IPR008824">
    <property type="entry name" value="RuvB-like_N"/>
</dbReference>
<dbReference type="InterPro" id="IPR008823">
    <property type="entry name" value="RuvB_C"/>
</dbReference>
<dbReference type="InterPro" id="IPR036388">
    <property type="entry name" value="WH-like_DNA-bd_sf"/>
</dbReference>
<dbReference type="InterPro" id="IPR036390">
    <property type="entry name" value="WH_DNA-bd_sf"/>
</dbReference>
<dbReference type="NCBIfam" id="NF000868">
    <property type="entry name" value="PRK00080.1"/>
    <property type="match status" value="1"/>
</dbReference>
<dbReference type="NCBIfam" id="TIGR00635">
    <property type="entry name" value="ruvB"/>
    <property type="match status" value="1"/>
</dbReference>
<dbReference type="PANTHER" id="PTHR42848">
    <property type="match status" value="1"/>
</dbReference>
<dbReference type="PANTHER" id="PTHR42848:SF1">
    <property type="entry name" value="HOLLIDAY JUNCTION BRANCH MIGRATION COMPLEX SUBUNIT RUVB"/>
    <property type="match status" value="1"/>
</dbReference>
<dbReference type="Pfam" id="PF17864">
    <property type="entry name" value="AAA_lid_4"/>
    <property type="match status" value="1"/>
</dbReference>
<dbReference type="Pfam" id="PF05491">
    <property type="entry name" value="RuvB_C"/>
    <property type="match status" value="1"/>
</dbReference>
<dbReference type="Pfam" id="PF05496">
    <property type="entry name" value="RuvB_N"/>
    <property type="match status" value="1"/>
</dbReference>
<dbReference type="PRINTS" id="PR00830">
    <property type="entry name" value="ENDOLAPTASE"/>
</dbReference>
<dbReference type="SMART" id="SM00382">
    <property type="entry name" value="AAA"/>
    <property type="match status" value="1"/>
</dbReference>
<dbReference type="SUPFAM" id="SSF52540">
    <property type="entry name" value="P-loop containing nucleoside triphosphate hydrolases"/>
    <property type="match status" value="1"/>
</dbReference>
<dbReference type="SUPFAM" id="SSF46785">
    <property type="entry name" value="Winged helix' DNA-binding domain"/>
    <property type="match status" value="1"/>
</dbReference>
<keyword id="KW-0067">ATP-binding</keyword>
<keyword id="KW-0963">Cytoplasm</keyword>
<keyword id="KW-0227">DNA damage</keyword>
<keyword id="KW-0233">DNA recombination</keyword>
<keyword id="KW-0234">DNA repair</keyword>
<keyword id="KW-0238">DNA-binding</keyword>
<keyword id="KW-0378">Hydrolase</keyword>
<keyword id="KW-0547">Nucleotide-binding</keyword>
<keyword id="KW-1185">Reference proteome</keyword>
<evidence type="ECO:0000255" key="1">
    <source>
        <dbReference type="HAMAP-Rule" id="MF_00016"/>
    </source>
</evidence>
<evidence type="ECO:0000256" key="2">
    <source>
        <dbReference type="SAM" id="MobiDB-lite"/>
    </source>
</evidence>
<gene>
    <name evidence="1" type="primary">ruvB</name>
    <name type="ordered locus">MSMEG_2945</name>
    <name type="ordered locus">MSMEI_2871</name>
</gene>
<protein>
    <recommendedName>
        <fullName evidence="1">Holliday junction branch migration complex subunit RuvB</fullName>
        <ecNumber evidence="1">3.6.4.-</ecNumber>
    </recommendedName>
</protein>
<name>RUVB_MYCS2</name>
<organism>
    <name type="scientific">Mycolicibacterium smegmatis (strain ATCC 700084 / mc(2)155)</name>
    <name type="common">Mycobacterium smegmatis</name>
    <dbReference type="NCBI Taxonomy" id="246196"/>
    <lineage>
        <taxon>Bacteria</taxon>
        <taxon>Bacillati</taxon>
        <taxon>Actinomycetota</taxon>
        <taxon>Actinomycetes</taxon>
        <taxon>Mycobacteriales</taxon>
        <taxon>Mycobacteriaceae</taxon>
        <taxon>Mycolicibacterium</taxon>
    </lineage>
</organism>
<feature type="chain" id="PRO_0000322815" description="Holliday junction branch migration complex subunit RuvB">
    <location>
        <begin position="1"/>
        <end position="351"/>
    </location>
</feature>
<feature type="region of interest" description="Large ATPase domain (RuvB-L)" evidence="1">
    <location>
        <begin position="1"/>
        <end position="191"/>
    </location>
</feature>
<feature type="region of interest" description="Disordered" evidence="2">
    <location>
        <begin position="1"/>
        <end position="23"/>
    </location>
</feature>
<feature type="region of interest" description="Small ATPAse domain (RuvB-S)" evidence="1">
    <location>
        <begin position="192"/>
        <end position="262"/>
    </location>
</feature>
<feature type="region of interest" description="Head domain (RuvB-H)" evidence="1">
    <location>
        <begin position="265"/>
        <end position="351"/>
    </location>
</feature>
<feature type="compositionally biased region" description="Acidic residues" evidence="2">
    <location>
        <begin position="1"/>
        <end position="12"/>
    </location>
</feature>
<feature type="binding site" evidence="1">
    <location>
        <position position="30"/>
    </location>
    <ligand>
        <name>ATP</name>
        <dbReference type="ChEBI" id="CHEBI:30616"/>
    </ligand>
</feature>
<feature type="binding site" evidence="1">
    <location>
        <position position="31"/>
    </location>
    <ligand>
        <name>ATP</name>
        <dbReference type="ChEBI" id="CHEBI:30616"/>
    </ligand>
</feature>
<feature type="binding site" evidence="1">
    <location>
        <position position="72"/>
    </location>
    <ligand>
        <name>ATP</name>
        <dbReference type="ChEBI" id="CHEBI:30616"/>
    </ligand>
</feature>
<feature type="binding site" evidence="1">
    <location>
        <position position="75"/>
    </location>
    <ligand>
        <name>ATP</name>
        <dbReference type="ChEBI" id="CHEBI:30616"/>
    </ligand>
</feature>
<feature type="binding site" evidence="1">
    <location>
        <position position="76"/>
    </location>
    <ligand>
        <name>ATP</name>
        <dbReference type="ChEBI" id="CHEBI:30616"/>
    </ligand>
</feature>
<feature type="binding site" evidence="1">
    <location>
        <position position="76"/>
    </location>
    <ligand>
        <name>Mg(2+)</name>
        <dbReference type="ChEBI" id="CHEBI:18420"/>
    </ligand>
</feature>
<feature type="binding site" evidence="1">
    <location>
        <position position="77"/>
    </location>
    <ligand>
        <name>ATP</name>
        <dbReference type="ChEBI" id="CHEBI:30616"/>
    </ligand>
</feature>
<feature type="binding site" evidence="1">
    <location>
        <begin position="138"/>
        <end position="140"/>
    </location>
    <ligand>
        <name>ATP</name>
        <dbReference type="ChEBI" id="CHEBI:30616"/>
    </ligand>
</feature>
<feature type="binding site" evidence="1">
    <location>
        <position position="181"/>
    </location>
    <ligand>
        <name>ATP</name>
        <dbReference type="ChEBI" id="CHEBI:30616"/>
    </ligand>
</feature>
<feature type="binding site" evidence="1">
    <location>
        <position position="191"/>
    </location>
    <ligand>
        <name>ATP</name>
        <dbReference type="ChEBI" id="CHEBI:30616"/>
    </ligand>
</feature>
<feature type="binding site" evidence="1">
    <location>
        <position position="228"/>
    </location>
    <ligand>
        <name>ATP</name>
        <dbReference type="ChEBI" id="CHEBI:30616"/>
    </ligand>
</feature>
<feature type="binding site" evidence="1">
    <location>
        <position position="320"/>
    </location>
    <ligand>
        <name>DNA</name>
        <dbReference type="ChEBI" id="CHEBI:16991"/>
    </ligand>
</feature>
<feature type="binding site" evidence="1">
    <location>
        <position position="325"/>
    </location>
    <ligand>
        <name>DNA</name>
        <dbReference type="ChEBI" id="CHEBI:16991"/>
    </ligand>
</feature>